<sequence>MKPFTQHTGLVCPLDRVNVDTDQIIPKQFLKSIKRTGFGPNLFDEWRYLDAGQPGQDNSKRPINSDFVLNFPRYRGASVLLARDNFGCGSSREHAAWALDEYGFRTVIAPSFADIFFNNSFKNGLLPLVLNKVEVDALFAQCQVTEGYTLTVDLAAQQVITLDGTTYAFQIDTFRKHCLLNGLDDIGLTLQHAEAIRAFEATHRIRQPWLFAPLR</sequence>
<accession>B2I6I5</accession>
<gene>
    <name evidence="1" type="primary">leuD</name>
    <name type="ordered locus">XfasM23_1484</name>
</gene>
<protein>
    <recommendedName>
        <fullName evidence="1">3-isopropylmalate dehydratase small subunit</fullName>
        <ecNumber evidence="1">4.2.1.33</ecNumber>
    </recommendedName>
    <alternativeName>
        <fullName evidence="1">Alpha-IPM isomerase</fullName>
        <shortName evidence="1">IPMI</shortName>
    </alternativeName>
    <alternativeName>
        <fullName evidence="1">Isopropylmalate isomerase</fullName>
    </alternativeName>
</protein>
<keyword id="KW-0028">Amino-acid biosynthesis</keyword>
<keyword id="KW-0100">Branched-chain amino acid biosynthesis</keyword>
<keyword id="KW-0432">Leucine biosynthesis</keyword>
<keyword id="KW-0456">Lyase</keyword>
<evidence type="ECO:0000255" key="1">
    <source>
        <dbReference type="HAMAP-Rule" id="MF_01031"/>
    </source>
</evidence>
<feature type="chain" id="PRO_1000135840" description="3-isopropylmalate dehydratase small subunit">
    <location>
        <begin position="1"/>
        <end position="215"/>
    </location>
</feature>
<name>LEUD_XYLF2</name>
<comment type="function">
    <text evidence="1">Catalyzes the isomerization between 2-isopropylmalate and 3-isopropylmalate, via the formation of 2-isopropylmaleate.</text>
</comment>
<comment type="catalytic activity">
    <reaction evidence="1">
        <text>(2R,3S)-3-isopropylmalate = (2S)-2-isopropylmalate</text>
        <dbReference type="Rhea" id="RHEA:32287"/>
        <dbReference type="ChEBI" id="CHEBI:1178"/>
        <dbReference type="ChEBI" id="CHEBI:35121"/>
        <dbReference type="EC" id="4.2.1.33"/>
    </reaction>
</comment>
<comment type="pathway">
    <text evidence="1">Amino-acid biosynthesis; L-leucine biosynthesis; L-leucine from 3-methyl-2-oxobutanoate: step 2/4.</text>
</comment>
<comment type="subunit">
    <text evidence="1">Heterodimer of LeuC and LeuD.</text>
</comment>
<comment type="similarity">
    <text evidence="1">Belongs to the LeuD family. LeuD type 1 subfamily.</text>
</comment>
<proteinExistence type="inferred from homology"/>
<organism>
    <name type="scientific">Xylella fastidiosa (strain M23)</name>
    <dbReference type="NCBI Taxonomy" id="405441"/>
    <lineage>
        <taxon>Bacteria</taxon>
        <taxon>Pseudomonadati</taxon>
        <taxon>Pseudomonadota</taxon>
        <taxon>Gammaproteobacteria</taxon>
        <taxon>Lysobacterales</taxon>
        <taxon>Lysobacteraceae</taxon>
        <taxon>Xylella</taxon>
    </lineage>
</organism>
<dbReference type="EC" id="4.2.1.33" evidence="1"/>
<dbReference type="EMBL" id="CP001011">
    <property type="protein sequence ID" value="ACB92895.1"/>
    <property type="molecule type" value="Genomic_DNA"/>
</dbReference>
<dbReference type="RefSeq" id="WP_004091003.1">
    <property type="nucleotide sequence ID" value="NC_010577.1"/>
</dbReference>
<dbReference type="SMR" id="B2I6I5"/>
<dbReference type="GeneID" id="93905214"/>
<dbReference type="KEGG" id="xfn:XfasM23_1484"/>
<dbReference type="HOGENOM" id="CLU_081378_0_3_6"/>
<dbReference type="UniPathway" id="UPA00048">
    <property type="reaction ID" value="UER00071"/>
</dbReference>
<dbReference type="Proteomes" id="UP000001698">
    <property type="component" value="Chromosome"/>
</dbReference>
<dbReference type="GO" id="GO:0009316">
    <property type="term" value="C:3-isopropylmalate dehydratase complex"/>
    <property type="evidence" value="ECO:0007669"/>
    <property type="project" value="InterPro"/>
</dbReference>
<dbReference type="GO" id="GO:0003861">
    <property type="term" value="F:3-isopropylmalate dehydratase activity"/>
    <property type="evidence" value="ECO:0007669"/>
    <property type="project" value="UniProtKB-UniRule"/>
</dbReference>
<dbReference type="GO" id="GO:0009098">
    <property type="term" value="P:L-leucine biosynthetic process"/>
    <property type="evidence" value="ECO:0007669"/>
    <property type="project" value="UniProtKB-UniRule"/>
</dbReference>
<dbReference type="CDD" id="cd01577">
    <property type="entry name" value="IPMI_Swivel"/>
    <property type="match status" value="1"/>
</dbReference>
<dbReference type="FunFam" id="3.20.19.10:FF:000003">
    <property type="entry name" value="3-isopropylmalate dehydratase small subunit"/>
    <property type="match status" value="1"/>
</dbReference>
<dbReference type="Gene3D" id="3.20.19.10">
    <property type="entry name" value="Aconitase, domain 4"/>
    <property type="match status" value="1"/>
</dbReference>
<dbReference type="HAMAP" id="MF_01031">
    <property type="entry name" value="LeuD_type1"/>
    <property type="match status" value="1"/>
</dbReference>
<dbReference type="InterPro" id="IPR004431">
    <property type="entry name" value="3-IsopropMal_deHydase_ssu"/>
</dbReference>
<dbReference type="InterPro" id="IPR015928">
    <property type="entry name" value="Aconitase/3IPM_dehydase_swvl"/>
</dbReference>
<dbReference type="InterPro" id="IPR000573">
    <property type="entry name" value="AconitaseA/IPMdHydase_ssu_swvl"/>
</dbReference>
<dbReference type="InterPro" id="IPR033940">
    <property type="entry name" value="IPMI_Swivel"/>
</dbReference>
<dbReference type="InterPro" id="IPR050075">
    <property type="entry name" value="LeuD"/>
</dbReference>
<dbReference type="NCBIfam" id="TIGR00171">
    <property type="entry name" value="leuD"/>
    <property type="match status" value="1"/>
</dbReference>
<dbReference type="NCBIfam" id="NF002458">
    <property type="entry name" value="PRK01641.1"/>
    <property type="match status" value="1"/>
</dbReference>
<dbReference type="PANTHER" id="PTHR43345:SF5">
    <property type="entry name" value="3-ISOPROPYLMALATE DEHYDRATASE SMALL SUBUNIT"/>
    <property type="match status" value="1"/>
</dbReference>
<dbReference type="PANTHER" id="PTHR43345">
    <property type="entry name" value="3-ISOPROPYLMALATE DEHYDRATASE SMALL SUBUNIT 2-RELATED-RELATED"/>
    <property type="match status" value="1"/>
</dbReference>
<dbReference type="Pfam" id="PF00694">
    <property type="entry name" value="Aconitase_C"/>
    <property type="match status" value="1"/>
</dbReference>
<dbReference type="SUPFAM" id="SSF52016">
    <property type="entry name" value="LeuD/IlvD-like"/>
    <property type="match status" value="1"/>
</dbReference>
<reference key="1">
    <citation type="journal article" date="2010" name="J. Bacteriol.">
        <title>Whole genome sequences of two Xylella fastidiosa strains (M12 and M23) causing almond leaf scorch disease in California.</title>
        <authorList>
            <person name="Chen J."/>
            <person name="Xie G."/>
            <person name="Han S."/>
            <person name="Chertkov O."/>
            <person name="Sims D."/>
            <person name="Civerolo E.L."/>
        </authorList>
    </citation>
    <scope>NUCLEOTIDE SEQUENCE [LARGE SCALE GENOMIC DNA]</scope>
    <source>
        <strain>M23</strain>
    </source>
</reference>